<gene>
    <name type="ordered locus">plu4907</name>
</gene>
<proteinExistence type="inferred from homology"/>
<organism>
    <name type="scientific">Photorhabdus laumondii subsp. laumondii (strain DSM 15139 / CIP 105565 / TT01)</name>
    <name type="common">Photorhabdus luminescens subsp. laumondii</name>
    <dbReference type="NCBI Taxonomy" id="243265"/>
    <lineage>
        <taxon>Bacteria</taxon>
        <taxon>Pseudomonadati</taxon>
        <taxon>Pseudomonadota</taxon>
        <taxon>Gammaproteobacteria</taxon>
        <taxon>Enterobacterales</taxon>
        <taxon>Morganellaceae</taxon>
        <taxon>Photorhabdus</taxon>
    </lineage>
</organism>
<feature type="chain" id="PRO_0000171848" description="Putative membrane protein insertion efficiency factor">
    <location>
        <begin position="1"/>
        <end position="86"/>
    </location>
</feature>
<feature type="region of interest" description="Disordered" evidence="2">
    <location>
        <begin position="67"/>
        <end position="86"/>
    </location>
</feature>
<reference key="1">
    <citation type="journal article" date="2003" name="Nat. Biotechnol.">
        <title>The genome sequence of the entomopathogenic bacterium Photorhabdus luminescens.</title>
        <authorList>
            <person name="Duchaud E."/>
            <person name="Rusniok C."/>
            <person name="Frangeul L."/>
            <person name="Buchrieser C."/>
            <person name="Givaudan A."/>
            <person name="Taourit S."/>
            <person name="Bocs S."/>
            <person name="Boursaux-Eude C."/>
            <person name="Chandler M."/>
            <person name="Charles J.-F."/>
            <person name="Dassa E."/>
            <person name="Derose R."/>
            <person name="Derzelle S."/>
            <person name="Freyssinet G."/>
            <person name="Gaudriault S."/>
            <person name="Medigue C."/>
            <person name="Lanois A."/>
            <person name="Powell K."/>
            <person name="Siguier P."/>
            <person name="Vincent R."/>
            <person name="Wingate V."/>
            <person name="Zouine M."/>
            <person name="Glaser P."/>
            <person name="Boemare N."/>
            <person name="Danchin A."/>
            <person name="Kunst F."/>
        </authorList>
    </citation>
    <scope>NUCLEOTIDE SEQUENCE [LARGE SCALE GENOMIC DNA]</scope>
    <source>
        <strain>DSM 15139 / CIP 105565 / TT01</strain>
    </source>
</reference>
<accession>Q7MXZ3</accession>
<dbReference type="EMBL" id="BX571875">
    <property type="protein sequence ID" value="CAE17279.1"/>
    <property type="molecule type" value="Genomic_DNA"/>
</dbReference>
<dbReference type="RefSeq" id="WP_011148960.1">
    <property type="nucleotide sequence ID" value="NC_005126.1"/>
</dbReference>
<dbReference type="STRING" id="243265.plu4907"/>
<dbReference type="GeneID" id="48851134"/>
<dbReference type="KEGG" id="plu:plu4907"/>
<dbReference type="eggNOG" id="COG0759">
    <property type="taxonomic scope" value="Bacteria"/>
</dbReference>
<dbReference type="HOGENOM" id="CLU_144811_5_2_6"/>
<dbReference type="OrthoDB" id="9801753at2"/>
<dbReference type="Proteomes" id="UP000002514">
    <property type="component" value="Chromosome"/>
</dbReference>
<dbReference type="GO" id="GO:0005886">
    <property type="term" value="C:plasma membrane"/>
    <property type="evidence" value="ECO:0007669"/>
    <property type="project" value="UniProtKB-SubCell"/>
</dbReference>
<dbReference type="HAMAP" id="MF_00386">
    <property type="entry name" value="UPF0161_YidD"/>
    <property type="match status" value="1"/>
</dbReference>
<dbReference type="InterPro" id="IPR002696">
    <property type="entry name" value="Membr_insert_effic_factor_YidD"/>
</dbReference>
<dbReference type="NCBIfam" id="TIGR00278">
    <property type="entry name" value="membrane protein insertion efficiency factor YidD"/>
    <property type="match status" value="1"/>
</dbReference>
<dbReference type="PANTHER" id="PTHR33383">
    <property type="entry name" value="MEMBRANE PROTEIN INSERTION EFFICIENCY FACTOR-RELATED"/>
    <property type="match status" value="1"/>
</dbReference>
<dbReference type="PANTHER" id="PTHR33383:SF1">
    <property type="entry name" value="MEMBRANE PROTEIN INSERTION EFFICIENCY FACTOR-RELATED"/>
    <property type="match status" value="1"/>
</dbReference>
<dbReference type="Pfam" id="PF01809">
    <property type="entry name" value="YidD"/>
    <property type="match status" value="1"/>
</dbReference>
<dbReference type="SMART" id="SM01234">
    <property type="entry name" value="Haemolytic"/>
    <property type="match status" value="1"/>
</dbReference>
<protein>
    <recommendedName>
        <fullName evidence="1">Putative membrane protein insertion efficiency factor</fullName>
    </recommendedName>
</protein>
<keyword id="KW-0997">Cell inner membrane</keyword>
<keyword id="KW-1003">Cell membrane</keyword>
<keyword id="KW-0472">Membrane</keyword>
<keyword id="KW-1185">Reference proteome</keyword>
<name>YIDD_PHOLL</name>
<evidence type="ECO:0000255" key="1">
    <source>
        <dbReference type="HAMAP-Rule" id="MF_00386"/>
    </source>
</evidence>
<evidence type="ECO:0000256" key="2">
    <source>
        <dbReference type="SAM" id="MobiDB-lite"/>
    </source>
</evidence>
<sequence>MASSLSFGSRFLIALIRGYQLVISPLLGPRCRFNPTCSQYGIEALRRFGVIKGCWLTVKRVLKCHPLHEGGDDPVPPVKNNDNREH</sequence>
<comment type="function">
    <text evidence="1">Could be involved in insertion of integral membrane proteins into the membrane.</text>
</comment>
<comment type="subcellular location">
    <subcellularLocation>
        <location evidence="1">Cell inner membrane</location>
        <topology evidence="1">Peripheral membrane protein</topology>
        <orientation evidence="1">Cytoplasmic side</orientation>
    </subcellularLocation>
</comment>
<comment type="similarity">
    <text evidence="1">Belongs to the UPF0161 family.</text>
</comment>